<proteinExistence type="inferred from homology"/>
<reference key="1">
    <citation type="journal article" date="2001" name="Nature">
        <title>Complete genome sequence of a multiple drug resistant Salmonella enterica serovar Typhi CT18.</title>
        <authorList>
            <person name="Parkhill J."/>
            <person name="Dougan G."/>
            <person name="James K.D."/>
            <person name="Thomson N.R."/>
            <person name="Pickard D."/>
            <person name="Wain J."/>
            <person name="Churcher C.M."/>
            <person name="Mungall K.L."/>
            <person name="Bentley S.D."/>
            <person name="Holden M.T.G."/>
            <person name="Sebaihia M."/>
            <person name="Baker S."/>
            <person name="Basham D."/>
            <person name="Brooks K."/>
            <person name="Chillingworth T."/>
            <person name="Connerton P."/>
            <person name="Cronin A."/>
            <person name="Davis P."/>
            <person name="Davies R.M."/>
            <person name="Dowd L."/>
            <person name="White N."/>
            <person name="Farrar J."/>
            <person name="Feltwell T."/>
            <person name="Hamlin N."/>
            <person name="Haque A."/>
            <person name="Hien T.T."/>
            <person name="Holroyd S."/>
            <person name="Jagels K."/>
            <person name="Krogh A."/>
            <person name="Larsen T.S."/>
            <person name="Leather S."/>
            <person name="Moule S."/>
            <person name="O'Gaora P."/>
            <person name="Parry C."/>
            <person name="Quail M.A."/>
            <person name="Rutherford K.M."/>
            <person name="Simmonds M."/>
            <person name="Skelton J."/>
            <person name="Stevens K."/>
            <person name="Whitehead S."/>
            <person name="Barrell B.G."/>
        </authorList>
    </citation>
    <scope>NUCLEOTIDE SEQUENCE [LARGE SCALE GENOMIC DNA]</scope>
    <source>
        <strain>CT18</strain>
    </source>
</reference>
<reference key="2">
    <citation type="journal article" date="2003" name="J. Bacteriol.">
        <title>Comparative genomics of Salmonella enterica serovar Typhi strains Ty2 and CT18.</title>
        <authorList>
            <person name="Deng W."/>
            <person name="Liou S.-R."/>
            <person name="Plunkett G. III"/>
            <person name="Mayhew G.F."/>
            <person name="Rose D.J."/>
            <person name="Burland V."/>
            <person name="Kodoyianni V."/>
            <person name="Schwartz D.C."/>
            <person name="Blattner F.R."/>
        </authorList>
    </citation>
    <scope>NUCLEOTIDE SEQUENCE [LARGE SCALE GENOMIC DNA]</scope>
    <source>
        <strain>ATCC 700931 / Ty2</strain>
    </source>
</reference>
<comment type="function">
    <text evidence="1">ATP-dependent carboxylate-amine ligase which exhibits weak glutamate--cysteine ligase activity.</text>
</comment>
<comment type="catalytic activity">
    <reaction evidence="1">
        <text>L-cysteine + L-glutamate + ATP = gamma-L-glutamyl-L-cysteine + ADP + phosphate + H(+)</text>
        <dbReference type="Rhea" id="RHEA:13285"/>
        <dbReference type="ChEBI" id="CHEBI:15378"/>
        <dbReference type="ChEBI" id="CHEBI:29985"/>
        <dbReference type="ChEBI" id="CHEBI:30616"/>
        <dbReference type="ChEBI" id="CHEBI:35235"/>
        <dbReference type="ChEBI" id="CHEBI:43474"/>
        <dbReference type="ChEBI" id="CHEBI:58173"/>
        <dbReference type="ChEBI" id="CHEBI:456216"/>
        <dbReference type="EC" id="6.3.2.2"/>
    </reaction>
</comment>
<comment type="subunit">
    <text evidence="1">Homodimer.</text>
</comment>
<comment type="similarity">
    <text evidence="1">Belongs to the glutamate--cysteine ligase type 2 family. YbdK subfamily.</text>
</comment>
<organism>
    <name type="scientific">Salmonella typhi</name>
    <dbReference type="NCBI Taxonomy" id="90370"/>
    <lineage>
        <taxon>Bacteria</taxon>
        <taxon>Pseudomonadati</taxon>
        <taxon>Pseudomonadota</taxon>
        <taxon>Gammaproteobacteria</taxon>
        <taxon>Enterobacterales</taxon>
        <taxon>Enterobacteriaceae</taxon>
        <taxon>Salmonella</taxon>
    </lineage>
</organism>
<evidence type="ECO:0000255" key="1">
    <source>
        <dbReference type="HAMAP-Rule" id="MF_01609"/>
    </source>
</evidence>
<evidence type="ECO:0000305" key="2"/>
<protein>
    <recommendedName>
        <fullName evidence="1">Putative glutamate--cysteine ligase 2</fullName>
        <ecNumber evidence="1">6.3.2.2</ecNumber>
    </recommendedName>
    <alternativeName>
        <fullName evidence="1">Gamma-glutamylcysteine synthetase 2</fullName>
        <shortName evidence="1">GCS 2</shortName>
        <shortName evidence="1">Gamma-GCS 2</shortName>
    </alternativeName>
</protein>
<accession>Q8Z8M0</accession>
<accession>Q83T03</accession>
<name>GCS2_SALTI</name>
<dbReference type="EC" id="6.3.2.2" evidence="1"/>
<dbReference type="EMBL" id="AL513382">
    <property type="protein sequence ID" value="CAD05059.1"/>
    <property type="molecule type" value="Genomic_DNA"/>
</dbReference>
<dbReference type="EMBL" id="AE014613">
    <property type="protein sequence ID" value="AAO69886.1"/>
    <property type="molecule type" value="Genomic_DNA"/>
</dbReference>
<dbReference type="RefSeq" id="NP_455160.1">
    <property type="nucleotide sequence ID" value="NC_003198.1"/>
</dbReference>
<dbReference type="RefSeq" id="WP_001196914.1">
    <property type="nucleotide sequence ID" value="NZ_WSUR01000008.1"/>
</dbReference>
<dbReference type="SMR" id="Q8Z8M0"/>
<dbReference type="STRING" id="220341.gene:17584640"/>
<dbReference type="KEGG" id="stt:t2285"/>
<dbReference type="KEGG" id="sty:STY0626"/>
<dbReference type="PATRIC" id="fig|220341.7.peg.627"/>
<dbReference type="eggNOG" id="COG2170">
    <property type="taxonomic scope" value="Bacteria"/>
</dbReference>
<dbReference type="HOGENOM" id="CLU_044848_1_1_6"/>
<dbReference type="OMA" id="THPFAQW"/>
<dbReference type="OrthoDB" id="9769628at2"/>
<dbReference type="Proteomes" id="UP000000541">
    <property type="component" value="Chromosome"/>
</dbReference>
<dbReference type="Proteomes" id="UP000002670">
    <property type="component" value="Chromosome"/>
</dbReference>
<dbReference type="GO" id="GO:0005524">
    <property type="term" value="F:ATP binding"/>
    <property type="evidence" value="ECO:0007669"/>
    <property type="project" value="UniProtKB-KW"/>
</dbReference>
<dbReference type="GO" id="GO:0004357">
    <property type="term" value="F:glutamate-cysteine ligase activity"/>
    <property type="evidence" value="ECO:0007669"/>
    <property type="project" value="UniProtKB-EC"/>
</dbReference>
<dbReference type="GO" id="GO:0042398">
    <property type="term" value="P:modified amino acid biosynthetic process"/>
    <property type="evidence" value="ECO:0007669"/>
    <property type="project" value="InterPro"/>
</dbReference>
<dbReference type="FunFam" id="3.30.590.20:FF:000002">
    <property type="entry name" value="Putative glutamate--cysteine ligase 2"/>
    <property type="match status" value="1"/>
</dbReference>
<dbReference type="Gene3D" id="3.30.590.20">
    <property type="match status" value="1"/>
</dbReference>
<dbReference type="HAMAP" id="MF_01609">
    <property type="entry name" value="Glu_cys_ligase_2"/>
    <property type="match status" value="1"/>
</dbReference>
<dbReference type="InterPro" id="IPR050141">
    <property type="entry name" value="GCL_type2/YbdK_subfam"/>
</dbReference>
<dbReference type="InterPro" id="IPR006336">
    <property type="entry name" value="GCS2"/>
</dbReference>
<dbReference type="InterPro" id="IPR014746">
    <property type="entry name" value="Gln_synth/guanido_kin_cat_dom"/>
</dbReference>
<dbReference type="InterPro" id="IPR011793">
    <property type="entry name" value="YbdK"/>
</dbReference>
<dbReference type="NCBIfam" id="TIGR02050">
    <property type="entry name" value="gshA_cyan_rel"/>
    <property type="match status" value="1"/>
</dbReference>
<dbReference type="NCBIfam" id="NF010040">
    <property type="entry name" value="PRK13516.1"/>
    <property type="match status" value="1"/>
</dbReference>
<dbReference type="PANTHER" id="PTHR36510">
    <property type="entry name" value="GLUTAMATE--CYSTEINE LIGASE 2-RELATED"/>
    <property type="match status" value="1"/>
</dbReference>
<dbReference type="PANTHER" id="PTHR36510:SF1">
    <property type="entry name" value="GLUTAMATE--CYSTEINE LIGASE 2-RELATED"/>
    <property type="match status" value="1"/>
</dbReference>
<dbReference type="Pfam" id="PF04107">
    <property type="entry name" value="GCS2"/>
    <property type="match status" value="1"/>
</dbReference>
<dbReference type="SUPFAM" id="SSF55931">
    <property type="entry name" value="Glutamine synthetase/guanido kinase"/>
    <property type="match status" value="1"/>
</dbReference>
<gene>
    <name type="primary">ybdK</name>
    <name type="ordered locus">STY0626</name>
    <name type="ordered locus">t2285</name>
</gene>
<keyword id="KW-0067">ATP-binding</keyword>
<keyword id="KW-0436">Ligase</keyword>
<keyword id="KW-0547">Nucleotide-binding</keyword>
<sequence length="372" mass="41669">MALNDFHVSEPYTLGIELEMQVINPPGYDLSQDSSTLIDAVKPQLTAGEIKHDITESMLEMATGVCRDIDQVAAQLSAMQHVILQAASEHHLGICGGGTHPFQKWQRQEVCDNERYQRTLENFGYLIQQATVFGQHVHVGCANGDDAIYLLHGLSHFVPHFIALSAASPYMQGSDTRFACARLNIFSAFPDNGPMPWVSNWQEFAGLFRRLSYTTMIDSIKDLHWDIRPSPAFGTVEVRVMDTPLTLDHAINMAGLIQATAHWLLTERPFKPQEQDYLLYKFNRFQACRYGLEGVLTDVYTGDRRRLADDTLRLLDNVTPSARKLGADSAIDALRLQVKKGGNEAQYMREFIADGGSLIGLVQKHCEIWAGQ</sequence>
<feature type="chain" id="PRO_0000218216" description="Putative glutamate--cysteine ligase 2">
    <location>
        <begin position="1"/>
        <end position="372"/>
    </location>
</feature>
<feature type="sequence conflict" description="In Ref. 2; AAO69886." evidence="2" ref="2">
    <original>G</original>
    <variation>S</variation>
    <location>
        <position position="27"/>
    </location>
</feature>